<proteinExistence type="inferred from homology"/>
<feature type="chain" id="PRO_0000241881" description="Orotidine 5'-phosphate decarboxylase">
    <location>
        <begin position="1"/>
        <end position="239"/>
    </location>
</feature>
<feature type="active site" description="Proton donor" evidence="1">
    <location>
        <position position="62"/>
    </location>
</feature>
<feature type="binding site" evidence="1">
    <location>
        <position position="11"/>
    </location>
    <ligand>
        <name>substrate</name>
    </ligand>
</feature>
<feature type="binding site" evidence="1">
    <location>
        <position position="33"/>
    </location>
    <ligand>
        <name>substrate</name>
    </ligand>
</feature>
<feature type="binding site" evidence="1">
    <location>
        <begin position="60"/>
        <end position="69"/>
    </location>
    <ligand>
        <name>substrate</name>
    </ligand>
</feature>
<feature type="binding site" evidence="1">
    <location>
        <position position="117"/>
    </location>
    <ligand>
        <name>substrate</name>
    </ligand>
</feature>
<feature type="binding site" evidence="1">
    <location>
        <position position="178"/>
    </location>
    <ligand>
        <name>substrate</name>
    </ligand>
</feature>
<feature type="binding site" evidence="1">
    <location>
        <position position="187"/>
    </location>
    <ligand>
        <name>substrate</name>
    </ligand>
</feature>
<feature type="binding site" evidence="1">
    <location>
        <position position="207"/>
    </location>
    <ligand>
        <name>substrate</name>
    </ligand>
</feature>
<feature type="binding site" evidence="1">
    <location>
        <position position="208"/>
    </location>
    <ligand>
        <name>substrate</name>
    </ligand>
</feature>
<dbReference type="EC" id="4.1.1.23" evidence="1"/>
<dbReference type="EMBL" id="CP000103">
    <property type="protein sequence ID" value="ABB75360.1"/>
    <property type="molecule type" value="Genomic_DNA"/>
</dbReference>
<dbReference type="RefSeq" id="WP_011381371.1">
    <property type="nucleotide sequence ID" value="NC_007614.1"/>
</dbReference>
<dbReference type="SMR" id="Q2Y7B1"/>
<dbReference type="STRING" id="323848.Nmul_A2066"/>
<dbReference type="KEGG" id="nmu:Nmul_A2066"/>
<dbReference type="eggNOG" id="COG0284">
    <property type="taxonomic scope" value="Bacteria"/>
</dbReference>
<dbReference type="HOGENOM" id="CLU_067069_0_0_4"/>
<dbReference type="OrthoDB" id="9806203at2"/>
<dbReference type="UniPathway" id="UPA00070">
    <property type="reaction ID" value="UER00120"/>
</dbReference>
<dbReference type="Proteomes" id="UP000002718">
    <property type="component" value="Chromosome"/>
</dbReference>
<dbReference type="GO" id="GO:0005829">
    <property type="term" value="C:cytosol"/>
    <property type="evidence" value="ECO:0007669"/>
    <property type="project" value="TreeGrafter"/>
</dbReference>
<dbReference type="GO" id="GO:0004590">
    <property type="term" value="F:orotidine-5'-phosphate decarboxylase activity"/>
    <property type="evidence" value="ECO:0007669"/>
    <property type="project" value="UniProtKB-UniRule"/>
</dbReference>
<dbReference type="GO" id="GO:0006207">
    <property type="term" value="P:'de novo' pyrimidine nucleobase biosynthetic process"/>
    <property type="evidence" value="ECO:0007669"/>
    <property type="project" value="InterPro"/>
</dbReference>
<dbReference type="GO" id="GO:0044205">
    <property type="term" value="P:'de novo' UMP biosynthetic process"/>
    <property type="evidence" value="ECO:0007669"/>
    <property type="project" value="UniProtKB-UniRule"/>
</dbReference>
<dbReference type="CDD" id="cd04725">
    <property type="entry name" value="OMP_decarboxylase_like"/>
    <property type="match status" value="1"/>
</dbReference>
<dbReference type="FunFam" id="3.20.20.70:FF:000015">
    <property type="entry name" value="Orotidine 5'-phosphate decarboxylase"/>
    <property type="match status" value="1"/>
</dbReference>
<dbReference type="Gene3D" id="3.20.20.70">
    <property type="entry name" value="Aldolase class I"/>
    <property type="match status" value="1"/>
</dbReference>
<dbReference type="HAMAP" id="MF_01200_B">
    <property type="entry name" value="OMPdecase_type1_B"/>
    <property type="match status" value="1"/>
</dbReference>
<dbReference type="InterPro" id="IPR013785">
    <property type="entry name" value="Aldolase_TIM"/>
</dbReference>
<dbReference type="InterPro" id="IPR014732">
    <property type="entry name" value="OMPdecase"/>
</dbReference>
<dbReference type="InterPro" id="IPR018089">
    <property type="entry name" value="OMPdecase_AS"/>
</dbReference>
<dbReference type="InterPro" id="IPR047596">
    <property type="entry name" value="OMPdecase_bac"/>
</dbReference>
<dbReference type="InterPro" id="IPR001754">
    <property type="entry name" value="OMPdeCOase_dom"/>
</dbReference>
<dbReference type="InterPro" id="IPR011060">
    <property type="entry name" value="RibuloseP-bd_barrel"/>
</dbReference>
<dbReference type="NCBIfam" id="NF001273">
    <property type="entry name" value="PRK00230.1"/>
    <property type="match status" value="1"/>
</dbReference>
<dbReference type="NCBIfam" id="TIGR01740">
    <property type="entry name" value="pyrF"/>
    <property type="match status" value="1"/>
</dbReference>
<dbReference type="PANTHER" id="PTHR32119">
    <property type="entry name" value="OROTIDINE 5'-PHOSPHATE DECARBOXYLASE"/>
    <property type="match status" value="1"/>
</dbReference>
<dbReference type="PANTHER" id="PTHR32119:SF2">
    <property type="entry name" value="OROTIDINE 5'-PHOSPHATE DECARBOXYLASE"/>
    <property type="match status" value="1"/>
</dbReference>
<dbReference type="Pfam" id="PF00215">
    <property type="entry name" value="OMPdecase"/>
    <property type="match status" value="1"/>
</dbReference>
<dbReference type="SMART" id="SM00934">
    <property type="entry name" value="OMPdecase"/>
    <property type="match status" value="1"/>
</dbReference>
<dbReference type="SUPFAM" id="SSF51366">
    <property type="entry name" value="Ribulose-phoshate binding barrel"/>
    <property type="match status" value="1"/>
</dbReference>
<dbReference type="PROSITE" id="PS00156">
    <property type="entry name" value="OMPDECASE"/>
    <property type="match status" value="1"/>
</dbReference>
<accession>Q2Y7B1</accession>
<comment type="function">
    <text evidence="1">Catalyzes the decarboxylation of orotidine 5'-monophosphate (OMP) to uridine 5'-monophosphate (UMP).</text>
</comment>
<comment type="catalytic activity">
    <reaction evidence="1">
        <text>orotidine 5'-phosphate + H(+) = UMP + CO2</text>
        <dbReference type="Rhea" id="RHEA:11596"/>
        <dbReference type="ChEBI" id="CHEBI:15378"/>
        <dbReference type="ChEBI" id="CHEBI:16526"/>
        <dbReference type="ChEBI" id="CHEBI:57538"/>
        <dbReference type="ChEBI" id="CHEBI:57865"/>
        <dbReference type="EC" id="4.1.1.23"/>
    </reaction>
</comment>
<comment type="pathway">
    <text evidence="1">Pyrimidine metabolism; UMP biosynthesis via de novo pathway; UMP from orotate: step 2/2.</text>
</comment>
<comment type="subunit">
    <text evidence="1">Homodimer.</text>
</comment>
<comment type="similarity">
    <text evidence="1">Belongs to the OMP decarboxylase family. Type 1 subfamily.</text>
</comment>
<evidence type="ECO:0000255" key="1">
    <source>
        <dbReference type="HAMAP-Rule" id="MF_01200"/>
    </source>
</evidence>
<name>PYRF_NITMU</name>
<keyword id="KW-0210">Decarboxylase</keyword>
<keyword id="KW-0456">Lyase</keyword>
<keyword id="KW-0665">Pyrimidine biosynthesis</keyword>
<keyword id="KW-1185">Reference proteome</keyword>
<sequence length="239" mass="25941">MNDPRIIVALDFPDSTSALDLVARLDPSLCRLKVGKELFTAAGPQLVEKMMGKGFEIFLDLKFHDIPTTVANACRTAAALGVWMMNVHALGGRRMLAAAREAVPPGSVRLIAVTLLTSMDQSDLDEVGLKGEPQDVVQRLAALTRDCGLDGVVCSPLETSRLRNAIGADFCLVTPGIRPADSSPDEQRRISTPRQAIENGADYLVIGRPITQATEPAVMLSRLNKDIEDIRDVSRFDNF</sequence>
<reference key="1">
    <citation type="submission" date="2005-08" db="EMBL/GenBank/DDBJ databases">
        <title>Complete sequence of chromosome 1 of Nitrosospira multiformis ATCC 25196.</title>
        <authorList>
            <person name="Copeland A."/>
            <person name="Lucas S."/>
            <person name="Lapidus A."/>
            <person name="Barry K."/>
            <person name="Detter J.C."/>
            <person name="Glavina T."/>
            <person name="Hammon N."/>
            <person name="Israni S."/>
            <person name="Pitluck S."/>
            <person name="Chain P."/>
            <person name="Malfatti S."/>
            <person name="Shin M."/>
            <person name="Vergez L."/>
            <person name="Schmutz J."/>
            <person name="Larimer F."/>
            <person name="Land M."/>
            <person name="Hauser L."/>
            <person name="Kyrpides N."/>
            <person name="Lykidis A."/>
            <person name="Richardson P."/>
        </authorList>
    </citation>
    <scope>NUCLEOTIDE SEQUENCE [LARGE SCALE GENOMIC DNA]</scope>
    <source>
        <strain>ATCC 25196 / NCIMB 11849 / C 71</strain>
    </source>
</reference>
<organism>
    <name type="scientific">Nitrosospira multiformis (strain ATCC 25196 / NCIMB 11849 / C 71)</name>
    <dbReference type="NCBI Taxonomy" id="323848"/>
    <lineage>
        <taxon>Bacteria</taxon>
        <taxon>Pseudomonadati</taxon>
        <taxon>Pseudomonadota</taxon>
        <taxon>Betaproteobacteria</taxon>
        <taxon>Nitrosomonadales</taxon>
        <taxon>Nitrosomonadaceae</taxon>
        <taxon>Nitrosospira</taxon>
    </lineage>
</organism>
<protein>
    <recommendedName>
        <fullName evidence="1">Orotidine 5'-phosphate decarboxylase</fullName>
        <ecNumber evidence="1">4.1.1.23</ecNumber>
    </recommendedName>
    <alternativeName>
        <fullName evidence="1">OMP decarboxylase</fullName>
        <shortName evidence="1">OMPDCase</shortName>
        <shortName evidence="1">OMPdecase</shortName>
    </alternativeName>
</protein>
<gene>
    <name evidence="1" type="primary">pyrF</name>
    <name type="ordered locus">Nmul_A2066</name>
</gene>